<protein>
    <recommendedName>
        <fullName>P2Y purinoceptor 4</fullName>
        <shortName>P2Y4</shortName>
    </recommendedName>
</protein>
<dbReference type="EMBL" id="AJ277752">
    <property type="protein sequence ID" value="CAB91043.1"/>
    <property type="molecule type" value="Genomic_DNA"/>
</dbReference>
<dbReference type="EMBL" id="AK076364">
    <property type="protein sequence ID" value="BAC36314.1"/>
    <property type="molecule type" value="mRNA"/>
</dbReference>
<dbReference type="CCDS" id="CCDS30303.1"/>
<dbReference type="RefSeq" id="NP_065646.1">
    <property type="nucleotide sequence ID" value="NM_020621.4"/>
</dbReference>
<dbReference type="RefSeq" id="XP_006528238.1">
    <property type="nucleotide sequence ID" value="XM_006528175.2"/>
</dbReference>
<dbReference type="RefSeq" id="XP_006528239.1">
    <property type="nucleotide sequence ID" value="XM_006528176.3"/>
</dbReference>
<dbReference type="RefSeq" id="XP_006528240.1">
    <property type="nucleotide sequence ID" value="XM_006528177.2"/>
</dbReference>
<dbReference type="RefSeq" id="XP_006528241.1">
    <property type="nucleotide sequence ID" value="XM_006528178.2"/>
</dbReference>
<dbReference type="SMR" id="Q9JJS7"/>
<dbReference type="CORUM" id="Q9JJS7"/>
<dbReference type="FunCoup" id="Q9JJS7">
    <property type="interactions" value="577"/>
</dbReference>
<dbReference type="STRING" id="10090.ENSMUSP00000055869"/>
<dbReference type="GlyCosmos" id="Q9JJS7">
    <property type="glycosylation" value="1 site, No reported glycans"/>
</dbReference>
<dbReference type="GlyGen" id="Q9JJS7">
    <property type="glycosylation" value="1 site"/>
</dbReference>
<dbReference type="PhosphoSitePlus" id="Q9JJS7"/>
<dbReference type="PaxDb" id="10090-ENSMUSP00000055869"/>
<dbReference type="ProteomicsDB" id="294418"/>
<dbReference type="Antibodypedia" id="13260">
    <property type="antibodies" value="275 antibodies from 28 providers"/>
</dbReference>
<dbReference type="DNASU" id="57385"/>
<dbReference type="Ensembl" id="ENSMUST00000053373.2">
    <property type="protein sequence ID" value="ENSMUSP00000055869.2"/>
    <property type="gene ID" value="ENSMUSG00000044359.2"/>
</dbReference>
<dbReference type="GeneID" id="57385"/>
<dbReference type="KEGG" id="mmu:57385"/>
<dbReference type="UCSC" id="uc009twc.1">
    <property type="organism name" value="mouse"/>
</dbReference>
<dbReference type="AGR" id="MGI:1926594"/>
<dbReference type="CTD" id="5030"/>
<dbReference type="MGI" id="MGI:1926594">
    <property type="gene designation" value="P2ry4"/>
</dbReference>
<dbReference type="VEuPathDB" id="HostDB:ENSMUSG00000044359"/>
<dbReference type="eggNOG" id="ENOG502QSTF">
    <property type="taxonomic scope" value="Eukaryota"/>
</dbReference>
<dbReference type="GeneTree" id="ENSGT01030000234621"/>
<dbReference type="HOGENOM" id="CLU_009579_8_2_1"/>
<dbReference type="InParanoid" id="Q9JJS7"/>
<dbReference type="OMA" id="TRTIYYM"/>
<dbReference type="OrthoDB" id="10018446at2759"/>
<dbReference type="PhylomeDB" id="Q9JJS7"/>
<dbReference type="TreeFam" id="TF350009"/>
<dbReference type="Reactome" id="R-MMU-417957">
    <property type="pathway name" value="P2Y receptors"/>
</dbReference>
<dbReference type="Reactome" id="R-MMU-418594">
    <property type="pathway name" value="G alpha (i) signalling events"/>
</dbReference>
<dbReference type="BioGRID-ORCS" id="57385">
    <property type="hits" value="2 hits in 77 CRISPR screens"/>
</dbReference>
<dbReference type="PRO" id="PR:Q9JJS7"/>
<dbReference type="Proteomes" id="UP000000589">
    <property type="component" value="Chromosome X"/>
</dbReference>
<dbReference type="RNAct" id="Q9JJS7">
    <property type="molecule type" value="protein"/>
</dbReference>
<dbReference type="Bgee" id="ENSMUSG00000044359">
    <property type="expression patterns" value="Expressed in esophagus and 22 other cell types or tissues"/>
</dbReference>
<dbReference type="ExpressionAtlas" id="Q9JJS7">
    <property type="expression patterns" value="baseline and differential"/>
</dbReference>
<dbReference type="GO" id="GO:0005886">
    <property type="term" value="C:plasma membrane"/>
    <property type="evidence" value="ECO:0007669"/>
    <property type="project" value="UniProtKB-SubCell"/>
</dbReference>
<dbReference type="GO" id="GO:0045028">
    <property type="term" value="F:G protein-coupled purinergic nucleotide receptor activity"/>
    <property type="evidence" value="ECO:0007669"/>
    <property type="project" value="InterPro"/>
</dbReference>
<dbReference type="GO" id="GO:0045030">
    <property type="term" value="F:G protein-coupled UTP receptor activity"/>
    <property type="evidence" value="ECO:0000314"/>
    <property type="project" value="MGI"/>
</dbReference>
<dbReference type="GO" id="GO:0019103">
    <property type="term" value="F:pyrimidine nucleotide binding"/>
    <property type="evidence" value="ECO:0000305"/>
    <property type="project" value="MGI"/>
</dbReference>
<dbReference type="GO" id="GO:0071380">
    <property type="term" value="P:cellular response to prostaglandin E stimulus"/>
    <property type="evidence" value="ECO:0000314"/>
    <property type="project" value="MGI"/>
</dbReference>
<dbReference type="GO" id="GO:0030321">
    <property type="term" value="P:transepithelial chloride transport"/>
    <property type="evidence" value="ECO:0000314"/>
    <property type="project" value="MGI"/>
</dbReference>
<dbReference type="CDD" id="cd15374">
    <property type="entry name" value="7tmA_P2Y4"/>
    <property type="match status" value="1"/>
</dbReference>
<dbReference type="FunFam" id="1.20.1070.10:FF:000017">
    <property type="entry name" value="lysophosphatidic acid receptor 4"/>
    <property type="match status" value="1"/>
</dbReference>
<dbReference type="Gene3D" id="1.20.1070.10">
    <property type="entry name" value="Rhodopsin 7-helix transmembrane proteins"/>
    <property type="match status" value="1"/>
</dbReference>
<dbReference type="InterPro" id="IPR000276">
    <property type="entry name" value="GPCR_Rhodpsn"/>
</dbReference>
<dbReference type="InterPro" id="IPR017452">
    <property type="entry name" value="GPCR_Rhodpsn_7TM"/>
</dbReference>
<dbReference type="InterPro" id="IPR000018">
    <property type="entry name" value="P2Y4"/>
</dbReference>
<dbReference type="PANTHER" id="PTHR24231:SF21">
    <property type="entry name" value="P2Y PURINOCEPTOR 4"/>
    <property type="match status" value="1"/>
</dbReference>
<dbReference type="PANTHER" id="PTHR24231">
    <property type="entry name" value="PURINOCEPTOR-RELATED G-PROTEIN COUPLED RECEPTOR"/>
    <property type="match status" value="1"/>
</dbReference>
<dbReference type="Pfam" id="PF00001">
    <property type="entry name" value="7tm_1"/>
    <property type="match status" value="1"/>
</dbReference>
<dbReference type="PRINTS" id="PR00237">
    <property type="entry name" value="GPCRRHODOPSN"/>
</dbReference>
<dbReference type="PRINTS" id="PR01066">
    <property type="entry name" value="P2Y4PRNOCPTR"/>
</dbReference>
<dbReference type="PRINTS" id="PR01157">
    <property type="entry name" value="P2YPURNOCPTR"/>
</dbReference>
<dbReference type="SUPFAM" id="SSF81321">
    <property type="entry name" value="Family A G protein-coupled receptor-like"/>
    <property type="match status" value="1"/>
</dbReference>
<dbReference type="PROSITE" id="PS00237">
    <property type="entry name" value="G_PROTEIN_RECEP_F1_1"/>
    <property type="match status" value="1"/>
</dbReference>
<dbReference type="PROSITE" id="PS50262">
    <property type="entry name" value="G_PROTEIN_RECEP_F1_2"/>
    <property type="match status" value="1"/>
</dbReference>
<feature type="chain" id="PRO_0000070022" description="P2Y purinoceptor 4">
    <location>
        <begin position="1"/>
        <end position="361"/>
    </location>
</feature>
<feature type="topological domain" description="Extracellular" evidence="2">
    <location>
        <begin position="1"/>
        <end position="30"/>
    </location>
</feature>
<feature type="transmembrane region" description="Helical; Name=1" evidence="2">
    <location>
        <begin position="31"/>
        <end position="58"/>
    </location>
</feature>
<feature type="topological domain" description="Cytoplasmic" evidence="2">
    <location>
        <begin position="59"/>
        <end position="68"/>
    </location>
</feature>
<feature type="transmembrane region" description="Helical; Name=2" evidence="2">
    <location>
        <begin position="69"/>
        <end position="91"/>
    </location>
</feature>
<feature type="topological domain" description="Extracellular" evidence="2">
    <location>
        <begin position="92"/>
        <end position="108"/>
    </location>
</feature>
<feature type="transmembrane region" description="Helical; Name=3" evidence="2">
    <location>
        <begin position="109"/>
        <end position="127"/>
    </location>
</feature>
<feature type="topological domain" description="Cytoplasmic" evidence="2">
    <location>
        <begin position="128"/>
        <end position="149"/>
    </location>
</feature>
<feature type="transmembrane region" description="Helical; Name=4" evidence="2">
    <location>
        <begin position="150"/>
        <end position="170"/>
    </location>
</feature>
<feature type="topological domain" description="Extracellular" evidence="2">
    <location>
        <begin position="171"/>
        <end position="192"/>
    </location>
</feature>
<feature type="transmembrane region" description="Helical; Name=5" evidence="2">
    <location>
        <begin position="193"/>
        <end position="218"/>
    </location>
</feature>
<feature type="topological domain" description="Cytoplasmic" evidence="2">
    <location>
        <begin position="219"/>
        <end position="242"/>
    </location>
</feature>
<feature type="transmembrane region" description="Helical; Name=6" evidence="2">
    <location>
        <begin position="243"/>
        <end position="265"/>
    </location>
</feature>
<feature type="topological domain" description="Extracellular" evidence="2">
    <location>
        <begin position="266"/>
        <end position="283"/>
    </location>
</feature>
<feature type="transmembrane region" description="Helical; Name=7" evidence="2">
    <location>
        <begin position="284"/>
        <end position="305"/>
    </location>
</feature>
<feature type="topological domain" description="Cytoplasmic" evidence="2">
    <location>
        <begin position="306"/>
        <end position="361"/>
    </location>
</feature>
<feature type="glycosylation site" description="N-linked (GlcNAc...) asparagine" evidence="2">
    <location>
        <position position="175"/>
    </location>
</feature>
<feature type="disulfide bond" evidence="3">
    <location>
        <begin position="104"/>
        <end position="181"/>
    </location>
</feature>
<gene>
    <name type="primary">P2ry4</name>
    <name type="synonym">P2y4r</name>
</gene>
<proteinExistence type="evidence at transcript level"/>
<keyword id="KW-1003">Cell membrane</keyword>
<keyword id="KW-1015">Disulfide bond</keyword>
<keyword id="KW-0297">G-protein coupled receptor</keyword>
<keyword id="KW-0325">Glycoprotein</keyword>
<keyword id="KW-0472">Membrane</keyword>
<keyword id="KW-0597">Phosphoprotein</keyword>
<keyword id="KW-0675">Receptor</keyword>
<keyword id="KW-1185">Reference proteome</keyword>
<keyword id="KW-0807">Transducer</keyword>
<keyword id="KW-0812">Transmembrane</keyword>
<keyword id="KW-1133">Transmembrane helix</keyword>
<accession>Q9JJS7</accession>
<evidence type="ECO:0000250" key="1"/>
<evidence type="ECO:0000255" key="2"/>
<evidence type="ECO:0000255" key="3">
    <source>
        <dbReference type="PROSITE-ProRule" id="PRU00521"/>
    </source>
</evidence>
<comment type="function">
    <text>Receptor for ATP and UTP coupled to G-proteins that activate a phosphatidylinositol-calcium second messenger system.</text>
</comment>
<comment type="subcellular location">
    <subcellularLocation>
        <location>Cell membrane</location>
        <topology>Multi-pass membrane protein</topology>
    </subcellularLocation>
</comment>
<comment type="tissue specificity">
    <text>Expressed in the liver, intestine, stomach, bladder and lung.</text>
</comment>
<comment type="PTM">
    <text evidence="1">Phosphorylation of Ser-329 and Ser-330 is a key step in agonist-dependent desensitization and loss of surface P2RY4. This phosphorylation does not involve PKC, nor other calcium-activated kinases (By similarity).</text>
</comment>
<comment type="similarity">
    <text evidence="3">Belongs to the G-protein coupled receptor 1 family.</text>
</comment>
<reference key="1">
    <citation type="journal article" date="2001" name="Eur. J. Pharmacol.">
        <title>Molecular cloning and characterization of the mouse P2Y4 nucleotide receptor.</title>
        <authorList>
            <person name="Suarez-Huerta N."/>
            <person name="Pouillon V."/>
            <person name="Boeynaems J.-M."/>
            <person name="Robaye B."/>
        </authorList>
    </citation>
    <scope>NUCLEOTIDE SEQUENCE</scope>
    <source>
        <strain>129/SvJ</strain>
    </source>
</reference>
<reference key="2">
    <citation type="journal article" date="2005" name="Science">
        <title>The transcriptional landscape of the mammalian genome.</title>
        <authorList>
            <person name="Carninci P."/>
            <person name="Kasukawa T."/>
            <person name="Katayama S."/>
            <person name="Gough J."/>
            <person name="Frith M.C."/>
            <person name="Maeda N."/>
            <person name="Oyama R."/>
            <person name="Ravasi T."/>
            <person name="Lenhard B."/>
            <person name="Wells C."/>
            <person name="Kodzius R."/>
            <person name="Shimokawa K."/>
            <person name="Bajic V.B."/>
            <person name="Brenner S.E."/>
            <person name="Batalov S."/>
            <person name="Forrest A.R."/>
            <person name="Zavolan M."/>
            <person name="Davis M.J."/>
            <person name="Wilming L.G."/>
            <person name="Aidinis V."/>
            <person name="Allen J.E."/>
            <person name="Ambesi-Impiombato A."/>
            <person name="Apweiler R."/>
            <person name="Aturaliya R.N."/>
            <person name="Bailey T.L."/>
            <person name="Bansal M."/>
            <person name="Baxter L."/>
            <person name="Beisel K.W."/>
            <person name="Bersano T."/>
            <person name="Bono H."/>
            <person name="Chalk A.M."/>
            <person name="Chiu K.P."/>
            <person name="Choudhary V."/>
            <person name="Christoffels A."/>
            <person name="Clutterbuck D.R."/>
            <person name="Crowe M.L."/>
            <person name="Dalla E."/>
            <person name="Dalrymple B.P."/>
            <person name="de Bono B."/>
            <person name="Della Gatta G."/>
            <person name="di Bernardo D."/>
            <person name="Down T."/>
            <person name="Engstrom P."/>
            <person name="Fagiolini M."/>
            <person name="Faulkner G."/>
            <person name="Fletcher C.F."/>
            <person name="Fukushima T."/>
            <person name="Furuno M."/>
            <person name="Futaki S."/>
            <person name="Gariboldi M."/>
            <person name="Georgii-Hemming P."/>
            <person name="Gingeras T.R."/>
            <person name="Gojobori T."/>
            <person name="Green R.E."/>
            <person name="Gustincich S."/>
            <person name="Harbers M."/>
            <person name="Hayashi Y."/>
            <person name="Hensch T.K."/>
            <person name="Hirokawa N."/>
            <person name="Hill D."/>
            <person name="Huminiecki L."/>
            <person name="Iacono M."/>
            <person name="Ikeo K."/>
            <person name="Iwama A."/>
            <person name="Ishikawa T."/>
            <person name="Jakt M."/>
            <person name="Kanapin A."/>
            <person name="Katoh M."/>
            <person name="Kawasawa Y."/>
            <person name="Kelso J."/>
            <person name="Kitamura H."/>
            <person name="Kitano H."/>
            <person name="Kollias G."/>
            <person name="Krishnan S.P."/>
            <person name="Kruger A."/>
            <person name="Kummerfeld S.K."/>
            <person name="Kurochkin I.V."/>
            <person name="Lareau L.F."/>
            <person name="Lazarevic D."/>
            <person name="Lipovich L."/>
            <person name="Liu J."/>
            <person name="Liuni S."/>
            <person name="McWilliam S."/>
            <person name="Madan Babu M."/>
            <person name="Madera M."/>
            <person name="Marchionni L."/>
            <person name="Matsuda H."/>
            <person name="Matsuzawa S."/>
            <person name="Miki H."/>
            <person name="Mignone F."/>
            <person name="Miyake S."/>
            <person name="Morris K."/>
            <person name="Mottagui-Tabar S."/>
            <person name="Mulder N."/>
            <person name="Nakano N."/>
            <person name="Nakauchi H."/>
            <person name="Ng P."/>
            <person name="Nilsson R."/>
            <person name="Nishiguchi S."/>
            <person name="Nishikawa S."/>
            <person name="Nori F."/>
            <person name="Ohara O."/>
            <person name="Okazaki Y."/>
            <person name="Orlando V."/>
            <person name="Pang K.C."/>
            <person name="Pavan W.J."/>
            <person name="Pavesi G."/>
            <person name="Pesole G."/>
            <person name="Petrovsky N."/>
            <person name="Piazza S."/>
            <person name="Reed J."/>
            <person name="Reid J.F."/>
            <person name="Ring B.Z."/>
            <person name="Ringwald M."/>
            <person name="Rost B."/>
            <person name="Ruan Y."/>
            <person name="Salzberg S.L."/>
            <person name="Sandelin A."/>
            <person name="Schneider C."/>
            <person name="Schoenbach C."/>
            <person name="Sekiguchi K."/>
            <person name="Semple C.A."/>
            <person name="Seno S."/>
            <person name="Sessa L."/>
            <person name="Sheng Y."/>
            <person name="Shibata Y."/>
            <person name="Shimada H."/>
            <person name="Shimada K."/>
            <person name="Silva D."/>
            <person name="Sinclair B."/>
            <person name="Sperling S."/>
            <person name="Stupka E."/>
            <person name="Sugiura K."/>
            <person name="Sultana R."/>
            <person name="Takenaka Y."/>
            <person name="Taki K."/>
            <person name="Tammoja K."/>
            <person name="Tan S.L."/>
            <person name="Tang S."/>
            <person name="Taylor M.S."/>
            <person name="Tegner J."/>
            <person name="Teichmann S.A."/>
            <person name="Ueda H.R."/>
            <person name="van Nimwegen E."/>
            <person name="Verardo R."/>
            <person name="Wei C.L."/>
            <person name="Yagi K."/>
            <person name="Yamanishi H."/>
            <person name="Zabarovsky E."/>
            <person name="Zhu S."/>
            <person name="Zimmer A."/>
            <person name="Hide W."/>
            <person name="Bult C."/>
            <person name="Grimmond S.M."/>
            <person name="Teasdale R.D."/>
            <person name="Liu E.T."/>
            <person name="Brusic V."/>
            <person name="Quackenbush J."/>
            <person name="Wahlestedt C."/>
            <person name="Mattick J.S."/>
            <person name="Hume D.A."/>
            <person name="Kai C."/>
            <person name="Sasaki D."/>
            <person name="Tomaru Y."/>
            <person name="Fukuda S."/>
            <person name="Kanamori-Katayama M."/>
            <person name="Suzuki M."/>
            <person name="Aoki J."/>
            <person name="Arakawa T."/>
            <person name="Iida J."/>
            <person name="Imamura K."/>
            <person name="Itoh M."/>
            <person name="Kato T."/>
            <person name="Kawaji H."/>
            <person name="Kawagashira N."/>
            <person name="Kawashima T."/>
            <person name="Kojima M."/>
            <person name="Kondo S."/>
            <person name="Konno H."/>
            <person name="Nakano K."/>
            <person name="Ninomiya N."/>
            <person name="Nishio T."/>
            <person name="Okada M."/>
            <person name="Plessy C."/>
            <person name="Shibata K."/>
            <person name="Shiraki T."/>
            <person name="Suzuki S."/>
            <person name="Tagami M."/>
            <person name="Waki K."/>
            <person name="Watahiki A."/>
            <person name="Okamura-Oho Y."/>
            <person name="Suzuki H."/>
            <person name="Kawai J."/>
            <person name="Hayashizaki Y."/>
        </authorList>
    </citation>
    <scope>NUCLEOTIDE SEQUENCE [LARGE SCALE MRNA]</scope>
    <source>
        <strain>C57BL/6J</strain>
        <tissue>Skin</tissue>
    </source>
</reference>
<organism>
    <name type="scientific">Mus musculus</name>
    <name type="common">Mouse</name>
    <dbReference type="NCBI Taxonomy" id="10090"/>
    <lineage>
        <taxon>Eukaryota</taxon>
        <taxon>Metazoa</taxon>
        <taxon>Chordata</taxon>
        <taxon>Craniata</taxon>
        <taxon>Vertebrata</taxon>
        <taxon>Euteleostomi</taxon>
        <taxon>Mammalia</taxon>
        <taxon>Eutheria</taxon>
        <taxon>Euarchontoglires</taxon>
        <taxon>Glires</taxon>
        <taxon>Rodentia</taxon>
        <taxon>Myomorpha</taxon>
        <taxon>Muroidea</taxon>
        <taxon>Muridae</taxon>
        <taxon>Murinae</taxon>
        <taxon>Mus</taxon>
        <taxon>Mus</taxon>
    </lineage>
</organism>
<sequence length="361" mass="41034">MTSADSLLFTSLGPSPSSGDGDCKFNEEFKFILLPLSYAVVFVLGLALNAPTLWLFLFRLRPWDATATYMFHLALSDTLYVLSLPTLVYYYAARNHWPFGTGFCKFVRFLFYWNLYCSVLFLTCISVHRYMGICHPLRAIRWGRPRFAGLLCLGVWLVVAGCLVPNLFFVTTNANGTTILCHDTTLPEEFDHYVYFSSTIMVLLFGFPFLITLVCYGLMARRLYRPLPGAGQSSSRLRSLRTIAVVLTVFAVCFVPFHITRTIYYLARLLNAECRVLNIVNVVYKVTRPLASANSCLDPVLYLFTGDKYRNQLQQLCRGSTPKRRTTASSLALVTLHEESISRWADIHQDSIFPAYEGDRL</sequence>
<name>P2RY4_MOUSE</name>